<name>RLMF_SALPB</name>
<organism>
    <name type="scientific">Salmonella paratyphi B (strain ATCC BAA-1250 / SPB7)</name>
    <dbReference type="NCBI Taxonomy" id="1016998"/>
    <lineage>
        <taxon>Bacteria</taxon>
        <taxon>Pseudomonadati</taxon>
        <taxon>Pseudomonadota</taxon>
        <taxon>Gammaproteobacteria</taxon>
        <taxon>Enterobacterales</taxon>
        <taxon>Enterobacteriaceae</taxon>
        <taxon>Salmonella</taxon>
    </lineage>
</organism>
<dbReference type="EC" id="2.1.1.181" evidence="1"/>
<dbReference type="EMBL" id="CP000886">
    <property type="protein sequence ID" value="ABX68055.1"/>
    <property type="molecule type" value="Genomic_DNA"/>
</dbReference>
<dbReference type="RefSeq" id="WP_001275965.1">
    <property type="nucleotide sequence ID" value="NC_010102.1"/>
</dbReference>
<dbReference type="SMR" id="A9MSU1"/>
<dbReference type="KEGG" id="spq:SPAB_02677"/>
<dbReference type="PATRIC" id="fig|1016998.12.peg.2533"/>
<dbReference type="HOGENOM" id="CLU_027534_3_0_6"/>
<dbReference type="BioCyc" id="SENT1016998:SPAB_RS10880-MONOMER"/>
<dbReference type="Proteomes" id="UP000008556">
    <property type="component" value="Chromosome"/>
</dbReference>
<dbReference type="GO" id="GO:0005737">
    <property type="term" value="C:cytoplasm"/>
    <property type="evidence" value="ECO:0007669"/>
    <property type="project" value="UniProtKB-SubCell"/>
</dbReference>
<dbReference type="GO" id="GO:0052907">
    <property type="term" value="F:23S rRNA (adenine(1618)-N(6))-methyltransferase activity"/>
    <property type="evidence" value="ECO:0007669"/>
    <property type="project" value="UniProtKB-EC"/>
</dbReference>
<dbReference type="GO" id="GO:0070475">
    <property type="term" value="P:rRNA base methylation"/>
    <property type="evidence" value="ECO:0007669"/>
    <property type="project" value="TreeGrafter"/>
</dbReference>
<dbReference type="FunFam" id="3.40.50.150:FF:000045">
    <property type="entry name" value="Ribosomal RNA large subunit methyltransferase F"/>
    <property type="match status" value="1"/>
</dbReference>
<dbReference type="Gene3D" id="3.40.50.150">
    <property type="entry name" value="Vaccinia Virus protein VP39"/>
    <property type="match status" value="1"/>
</dbReference>
<dbReference type="HAMAP" id="MF_01848">
    <property type="entry name" value="23SrRNA_methyltr_F"/>
    <property type="match status" value="1"/>
</dbReference>
<dbReference type="InterPro" id="IPR010286">
    <property type="entry name" value="METTL16/RlmF"/>
</dbReference>
<dbReference type="InterPro" id="IPR016909">
    <property type="entry name" value="rRNA_lsu_MeTfrase_F"/>
</dbReference>
<dbReference type="InterPro" id="IPR029063">
    <property type="entry name" value="SAM-dependent_MTases_sf"/>
</dbReference>
<dbReference type="NCBIfam" id="NF008725">
    <property type="entry name" value="PRK11727.1"/>
    <property type="match status" value="1"/>
</dbReference>
<dbReference type="PANTHER" id="PTHR13393:SF0">
    <property type="entry name" value="RNA N6-ADENOSINE-METHYLTRANSFERASE METTL16"/>
    <property type="match status" value="1"/>
</dbReference>
<dbReference type="PANTHER" id="PTHR13393">
    <property type="entry name" value="SAM-DEPENDENT METHYLTRANSFERASE"/>
    <property type="match status" value="1"/>
</dbReference>
<dbReference type="Pfam" id="PF05971">
    <property type="entry name" value="Methyltransf_10"/>
    <property type="match status" value="1"/>
</dbReference>
<dbReference type="PIRSF" id="PIRSF029038">
    <property type="entry name" value="Mtase_YbiN_prd"/>
    <property type="match status" value="1"/>
</dbReference>
<dbReference type="SUPFAM" id="SSF53335">
    <property type="entry name" value="S-adenosyl-L-methionine-dependent methyltransferases"/>
    <property type="match status" value="1"/>
</dbReference>
<reference key="1">
    <citation type="submission" date="2007-11" db="EMBL/GenBank/DDBJ databases">
        <authorList>
            <consortium name="The Salmonella enterica serovar Paratyphi B Genome Sequencing Project"/>
            <person name="McClelland M."/>
            <person name="Sanderson E.K."/>
            <person name="Porwollik S."/>
            <person name="Spieth J."/>
            <person name="Clifton W.S."/>
            <person name="Fulton R."/>
            <person name="Cordes M."/>
            <person name="Wollam A."/>
            <person name="Shah N."/>
            <person name="Pepin K."/>
            <person name="Bhonagiri V."/>
            <person name="Nash W."/>
            <person name="Johnson M."/>
            <person name="Thiruvilangam P."/>
            <person name="Wilson R."/>
        </authorList>
    </citation>
    <scope>NUCLEOTIDE SEQUENCE [LARGE SCALE GENOMIC DNA]</scope>
    <source>
        <strain>ATCC BAA-1250 / SPB7</strain>
    </source>
</reference>
<accession>A9MSU1</accession>
<sequence length="308" mass="34266">MSAQKPGLHPRNRHQHRYDLAALCQTTPELTSFLIRTPAGEQSVDFANPQAVKALNKALLAHFYAVTHWDIPPGFLCPPVPGRADYIHHLADLLGETTGSIPAQATILDVGVGANCIYPLIGVHEYGWRFTGSEVSDAAMSSAQAIIQANTGLSRAIRLRRQKDPAAIFTGIIHKNEFYDATLCNPPFHDSAAAARAGSERKRRNLGQNKDDALNFGGQQQELWCEGGEVAFIKKMIAESQTFRRQVLWFTTLVSRGENLPPLYRALTEAGAVKVVKKEMAQGQKQSRFIAWTFMGDDQRRRFITRKR</sequence>
<feature type="chain" id="PRO_0000349947" description="Ribosomal RNA large subunit methyltransferase F">
    <location>
        <begin position="1"/>
        <end position="308"/>
    </location>
</feature>
<comment type="function">
    <text evidence="1">Specifically methylates the adenine in position 1618 of 23S rRNA.</text>
</comment>
<comment type="catalytic activity">
    <reaction evidence="1">
        <text>adenosine(1618) in 23S rRNA + S-adenosyl-L-methionine = N(6)-methyladenosine(1618) in 23S rRNA + S-adenosyl-L-homocysteine + H(+)</text>
        <dbReference type="Rhea" id="RHEA:16497"/>
        <dbReference type="Rhea" id="RHEA-COMP:10229"/>
        <dbReference type="Rhea" id="RHEA-COMP:10231"/>
        <dbReference type="ChEBI" id="CHEBI:15378"/>
        <dbReference type="ChEBI" id="CHEBI:57856"/>
        <dbReference type="ChEBI" id="CHEBI:59789"/>
        <dbReference type="ChEBI" id="CHEBI:74411"/>
        <dbReference type="ChEBI" id="CHEBI:74449"/>
        <dbReference type="EC" id="2.1.1.181"/>
    </reaction>
</comment>
<comment type="subcellular location">
    <subcellularLocation>
        <location evidence="1">Cytoplasm</location>
    </subcellularLocation>
</comment>
<comment type="similarity">
    <text evidence="1">Belongs to the methyltransferase superfamily. METTL16/RlmF family.</text>
</comment>
<protein>
    <recommendedName>
        <fullName evidence="1">Ribosomal RNA large subunit methyltransferase F</fullName>
        <ecNumber evidence="1">2.1.1.181</ecNumber>
    </recommendedName>
    <alternativeName>
        <fullName evidence="1">23S rRNA mA1618 methyltransferase</fullName>
    </alternativeName>
    <alternativeName>
        <fullName evidence="1">rRNA adenine N-6-methyltransferase</fullName>
    </alternativeName>
</protein>
<evidence type="ECO:0000255" key="1">
    <source>
        <dbReference type="HAMAP-Rule" id="MF_01848"/>
    </source>
</evidence>
<gene>
    <name evidence="1" type="primary">rlmF</name>
    <name type="ordered locus">SPAB_02677</name>
</gene>
<keyword id="KW-0963">Cytoplasm</keyword>
<keyword id="KW-0489">Methyltransferase</keyword>
<keyword id="KW-0698">rRNA processing</keyword>
<keyword id="KW-0949">S-adenosyl-L-methionine</keyword>
<keyword id="KW-0808">Transferase</keyword>
<proteinExistence type="inferred from homology"/>